<reference key="1">
    <citation type="journal article" date="2014" name="PLoS Genet.">
        <title>Analysis of the genome and transcriptome of Cryptococcus neoformans var. grubii reveals complex RNA expression and microevolution leading to virulence attenuation.</title>
        <authorList>
            <person name="Janbon G."/>
            <person name="Ormerod K.L."/>
            <person name="Paulet D."/>
            <person name="Byrnes E.J. III"/>
            <person name="Yadav V."/>
            <person name="Chatterjee G."/>
            <person name="Mullapudi N."/>
            <person name="Hon C.-C."/>
            <person name="Billmyre R.B."/>
            <person name="Brunel F."/>
            <person name="Bahn Y.-S."/>
            <person name="Chen W."/>
            <person name="Chen Y."/>
            <person name="Chow E.W.L."/>
            <person name="Coppee J.-Y."/>
            <person name="Floyd-Averette A."/>
            <person name="Gaillardin C."/>
            <person name="Gerik K.J."/>
            <person name="Goldberg J."/>
            <person name="Gonzalez-Hilarion S."/>
            <person name="Gujja S."/>
            <person name="Hamlin J.L."/>
            <person name="Hsueh Y.-P."/>
            <person name="Ianiri G."/>
            <person name="Jones S."/>
            <person name="Kodira C.D."/>
            <person name="Kozubowski L."/>
            <person name="Lam W."/>
            <person name="Marra M."/>
            <person name="Mesner L.D."/>
            <person name="Mieczkowski P.A."/>
            <person name="Moyrand F."/>
            <person name="Nielsen K."/>
            <person name="Proux C."/>
            <person name="Rossignol T."/>
            <person name="Schein J.E."/>
            <person name="Sun S."/>
            <person name="Wollschlaeger C."/>
            <person name="Wood I.A."/>
            <person name="Zeng Q."/>
            <person name="Neuveglise C."/>
            <person name="Newlon C.S."/>
            <person name="Perfect J.R."/>
            <person name="Lodge J.K."/>
            <person name="Idnurm A."/>
            <person name="Stajich J.E."/>
            <person name="Kronstad J.W."/>
            <person name="Sanyal K."/>
            <person name="Heitman J."/>
            <person name="Fraser J.A."/>
            <person name="Cuomo C.A."/>
            <person name="Dietrich F.S."/>
        </authorList>
    </citation>
    <scope>NUCLEOTIDE SEQUENCE [LARGE SCALE GENOMIC DNA]</scope>
    <source>
        <strain>H99 / ATCC 208821 / CBS 10515 / FGSC 9487</strain>
    </source>
</reference>
<reference key="2">
    <citation type="journal article" date="2001" name="Infect. Immun.">
        <title>Laccase of Cryptococcus neoformans is a cell wall-associated virulence factor.</title>
        <authorList>
            <person name="Zhu X."/>
            <person name="Gibbons J."/>
            <person name="Garcia-Rivera J."/>
            <person name="Casadevall A."/>
            <person name="Williamson P.R."/>
        </authorList>
    </citation>
    <scope>SUBCELLULAR LOCATION</scope>
</reference>
<reference key="3">
    <citation type="journal article" date="2004" name="FEMS Yeast Res.">
        <title>Role of laccase in the biology and virulence of Cryptococcus neoformans.</title>
        <authorList>
            <person name="Zhu X."/>
            <person name="Williamson P.R."/>
        </authorList>
    </citation>
    <scope>REVIEW</scope>
</reference>
<feature type="signal peptide" evidence="6">
    <location>
        <begin position="1"/>
        <end position="20"/>
    </location>
</feature>
<feature type="chain" id="PRO_5003827757" description="Laccase-2" evidence="6">
    <location>
        <begin position="21"/>
        <end position="594"/>
    </location>
</feature>
<feature type="domain" description="Plastocyanin-like 1" evidence="6">
    <location>
        <begin position="70"/>
        <end position="183"/>
    </location>
</feature>
<feature type="domain" description="Plastocyanin-like 2" evidence="6">
    <location>
        <begin position="195"/>
        <end position="357"/>
    </location>
</feature>
<feature type="domain" description="Plastocyanin-like 3" evidence="6">
    <location>
        <begin position="466"/>
        <end position="563"/>
    </location>
</feature>
<feature type="binding site" description="type 2 copper site" evidence="3">
    <location>
        <position position="117"/>
    </location>
    <ligand>
        <name>Cu cation</name>
        <dbReference type="ChEBI" id="CHEBI:23378"/>
        <label>1</label>
    </ligand>
</feature>
<feature type="binding site" description="type 3 copper site" evidence="3">
    <location>
        <position position="119"/>
    </location>
    <ligand>
        <name>Cu cation</name>
        <dbReference type="ChEBI" id="CHEBI:23378"/>
        <label>2</label>
    </ligand>
</feature>
<feature type="binding site" description="type 3 copper site" evidence="3">
    <location>
        <position position="162"/>
    </location>
    <ligand>
        <name>Cu cation</name>
        <dbReference type="ChEBI" id="CHEBI:23378"/>
        <label>2</label>
    </ligand>
</feature>
<feature type="binding site" description="type 3 copper site" evidence="3">
    <location>
        <position position="164"/>
    </location>
    <ligand>
        <name>Cu cation</name>
        <dbReference type="ChEBI" id="CHEBI:23378"/>
        <label>3</label>
    </ligand>
</feature>
<feature type="binding site" description="type 1 copper site" evidence="3">
    <location>
        <position position="480"/>
    </location>
    <ligand>
        <name>Cu cation</name>
        <dbReference type="ChEBI" id="CHEBI:23378"/>
        <label>4</label>
    </ligand>
</feature>
<feature type="binding site" description="type 2 copper site" evidence="3">
    <location>
        <position position="483"/>
    </location>
    <ligand>
        <name>Cu cation</name>
        <dbReference type="ChEBI" id="CHEBI:23378"/>
        <label>1</label>
    </ligand>
</feature>
<feature type="binding site" description="type 3 copper site" evidence="3">
    <location>
        <position position="485"/>
    </location>
    <ligand>
        <name>Cu cation</name>
        <dbReference type="ChEBI" id="CHEBI:23378"/>
        <label>3</label>
    </ligand>
</feature>
<feature type="binding site" description="type 3 copper site" evidence="1">
    <location>
        <position position="543"/>
    </location>
    <ligand>
        <name>Cu cation</name>
        <dbReference type="ChEBI" id="CHEBI:23378"/>
        <label>3</label>
    </ligand>
</feature>
<feature type="binding site" description="type 1 copper site" evidence="1">
    <location>
        <position position="544"/>
    </location>
    <ligand>
        <name>Cu cation</name>
        <dbReference type="ChEBI" id="CHEBI:23378"/>
        <label>4</label>
    </ligand>
</feature>
<feature type="binding site" description="type 3 copper site" evidence="1">
    <location>
        <position position="545"/>
    </location>
    <ligand>
        <name>Cu cation</name>
        <dbReference type="ChEBI" id="CHEBI:23378"/>
        <label>2</label>
    </ligand>
</feature>
<feature type="binding site" description="type 1 copper site" evidence="1">
    <location>
        <position position="549"/>
    </location>
    <ligand>
        <name>Cu cation</name>
        <dbReference type="ChEBI" id="CHEBI:23378"/>
        <label>4</label>
    </ligand>
</feature>
<feature type="glycosylation site" description="N-linked (GlcNAc...) asparagine" evidence="7">
    <location>
        <position position="67"/>
    </location>
</feature>
<feature type="glycosylation site" description="N-linked (GlcNAc...) asparagine" evidence="7">
    <location>
        <position position="124"/>
    </location>
</feature>
<feature type="glycosylation site" description="N-linked (GlcNAc...) asparagine" evidence="7">
    <location>
        <position position="242"/>
    </location>
</feature>
<feature type="glycosylation site" description="N-linked (GlcNAc...) asparagine" evidence="7">
    <location>
        <position position="286"/>
    </location>
</feature>
<feature type="glycosylation site" description="N-linked (GlcNAc...) asparagine" evidence="7">
    <location>
        <position position="320"/>
    </location>
</feature>
<feature type="glycosylation site" description="N-linked (GlcNAc...) asparagine" evidence="7">
    <location>
        <position position="358"/>
    </location>
</feature>
<feature type="glycosylation site" description="N-linked (GlcNAc...) asparagine" evidence="7">
    <location>
        <position position="397"/>
    </location>
</feature>
<feature type="glycosylation site" description="N-linked (GlcNAc...) asparagine" evidence="7">
    <location>
        <position position="430"/>
    </location>
</feature>
<feature type="glycosylation site" description="N-linked (GlcNAc...) asparagine" evidence="7">
    <location>
        <position position="452"/>
    </location>
</feature>
<feature type="glycosylation site" description="N-linked (GlcNAc...) asparagine" evidence="7">
    <location>
        <position position="458"/>
    </location>
</feature>
<feature type="glycosylation site" description="N-linked (GlcNAc...) asparagine" evidence="7">
    <location>
        <position position="508"/>
    </location>
</feature>
<feature type="disulfide bond" evidence="5">
    <location>
        <begin position="138"/>
        <end position="578"/>
    </location>
</feature>
<proteinExistence type="inferred from homology"/>
<gene>
    <name type="primary">LAC2</name>
    <name type="ORF">CNAG_03464</name>
</gene>
<comment type="function">
    <text evidence="4 9">Laccase that catalyzes the oxidation of certain aromatic compounds, including L-dopa, to quinones, which then polymerize to melanin (By similarity). Able to oxidize a wide variety of aromatic diphenol and diamino groups in the ortho, meta, and para positions but not monophenolic groups such as in phenol, tyramine, or tyrosine (By similarity). Plays an important role in virulence (By similarity). Plays a role in dissemination to extrapulmonary sites but is not involved in pulmonary growth or in elicitation of cellular immune responses in the lung (By similarity).</text>
</comment>
<comment type="catalytic activity">
    <reaction evidence="2">
        <text>4 hydroquinone + O2 = 4 benzosemiquinone + 2 H2O</text>
        <dbReference type="Rhea" id="RHEA:11276"/>
        <dbReference type="ChEBI" id="CHEBI:15377"/>
        <dbReference type="ChEBI" id="CHEBI:15379"/>
        <dbReference type="ChEBI" id="CHEBI:17594"/>
        <dbReference type="ChEBI" id="CHEBI:17977"/>
        <dbReference type="EC" id="1.10.3.2"/>
    </reaction>
</comment>
<comment type="cofactor">
    <cofactor evidence="2">
        <name>Cu cation</name>
        <dbReference type="ChEBI" id="CHEBI:23378"/>
    </cofactor>
    <text evidence="5">Binds 4 Cu cations per monomer.</text>
</comment>
<comment type="subcellular location">
    <subcellularLocation>
        <location evidence="8">Secreted</location>
    </subcellularLocation>
    <subcellularLocation>
        <location evidence="8">Secreted</location>
        <location evidence="8">Cell wall</location>
    </subcellularLocation>
</comment>
<comment type="similarity">
    <text evidence="10">Belongs to the multicopper oxidase family.</text>
</comment>
<dbReference type="EC" id="1.10.3.2" evidence="2"/>
<dbReference type="EMBL" id="CP003827">
    <property type="protein sequence ID" value="AFR96688.2"/>
    <property type="molecule type" value="Genomic_DNA"/>
</dbReference>
<dbReference type="RefSeq" id="XP_012050964.1">
    <property type="nucleotide sequence ID" value="XM_012195574.1"/>
</dbReference>
<dbReference type="SMR" id="J9VQZ4"/>
<dbReference type="GlyCosmos" id="J9VQZ4">
    <property type="glycosylation" value="11 sites, No reported glycans"/>
</dbReference>
<dbReference type="GeneID" id="23886968"/>
<dbReference type="KEGG" id="cng:CNAG_03464"/>
<dbReference type="VEuPathDB" id="FungiDB:CNAG_03464"/>
<dbReference type="HOGENOM" id="CLU_006504_7_1_1"/>
<dbReference type="OrthoDB" id="4810at5206"/>
<dbReference type="Proteomes" id="UP000010091">
    <property type="component" value="Chromosome 8"/>
</dbReference>
<dbReference type="GO" id="GO:0005576">
    <property type="term" value="C:extracellular region"/>
    <property type="evidence" value="ECO:0007669"/>
    <property type="project" value="UniProtKB-SubCell"/>
</dbReference>
<dbReference type="GO" id="GO:0005507">
    <property type="term" value="F:copper ion binding"/>
    <property type="evidence" value="ECO:0007669"/>
    <property type="project" value="InterPro"/>
</dbReference>
<dbReference type="GO" id="GO:0052716">
    <property type="term" value="F:hydroquinone:oxygen oxidoreductase activity"/>
    <property type="evidence" value="ECO:0007669"/>
    <property type="project" value="UniProtKB-EC"/>
</dbReference>
<dbReference type="CDD" id="cd13857">
    <property type="entry name" value="CuRO_1_Diphenol_Ox"/>
    <property type="match status" value="1"/>
</dbReference>
<dbReference type="CDD" id="cd13883">
    <property type="entry name" value="CuRO_2_Diphenol_Ox"/>
    <property type="match status" value="1"/>
</dbReference>
<dbReference type="CDD" id="cd13904">
    <property type="entry name" value="CuRO_3_Diphenol_Ox"/>
    <property type="match status" value="1"/>
</dbReference>
<dbReference type="FunFam" id="2.60.40.420:FF:000045">
    <property type="entry name" value="Laccase 2"/>
    <property type="match status" value="1"/>
</dbReference>
<dbReference type="Gene3D" id="2.60.40.420">
    <property type="entry name" value="Cupredoxins - blue copper proteins"/>
    <property type="match status" value="3"/>
</dbReference>
<dbReference type="InterPro" id="IPR011707">
    <property type="entry name" value="Cu-oxidase-like_N"/>
</dbReference>
<dbReference type="InterPro" id="IPR001117">
    <property type="entry name" value="Cu-oxidase_2nd"/>
</dbReference>
<dbReference type="InterPro" id="IPR011706">
    <property type="entry name" value="Cu-oxidase_C"/>
</dbReference>
<dbReference type="InterPro" id="IPR045087">
    <property type="entry name" value="Cu-oxidase_fam"/>
</dbReference>
<dbReference type="InterPro" id="IPR008972">
    <property type="entry name" value="Cupredoxin"/>
</dbReference>
<dbReference type="PANTHER" id="PTHR11709:SF414">
    <property type="entry name" value="ADR239WP"/>
    <property type="match status" value="1"/>
</dbReference>
<dbReference type="PANTHER" id="PTHR11709">
    <property type="entry name" value="MULTI-COPPER OXIDASE"/>
    <property type="match status" value="1"/>
</dbReference>
<dbReference type="Pfam" id="PF00394">
    <property type="entry name" value="Cu-oxidase"/>
    <property type="match status" value="1"/>
</dbReference>
<dbReference type="Pfam" id="PF07731">
    <property type="entry name" value="Cu-oxidase_2"/>
    <property type="match status" value="1"/>
</dbReference>
<dbReference type="Pfam" id="PF07732">
    <property type="entry name" value="Cu-oxidase_3"/>
    <property type="match status" value="1"/>
</dbReference>
<dbReference type="SUPFAM" id="SSF49503">
    <property type="entry name" value="Cupredoxins"/>
    <property type="match status" value="3"/>
</dbReference>
<sequence>MGGIIKLSFLFCSLISLVNSENTGKLPTAISDHSVPKATATTDPSVFVLSNDFEITDVPTTREYTFNLTEALASPDGYERLVYAVNNMLPGPVIEANTGDTVIVHVNNYLHEGQGIHWHGLRQNGTALMDGVPGITQCSIPPGGSFTYQFTVSHQSGTFWWHSHYSNSMADGIWGPLIVHSPNEPLQRGRDYDEDRIVAVTDWMHDESETIVEALISSEGYRGRPFPPQGDAILINGRGQTNCTATGSPSCTYPPPPEIHVPVNCRVRLRFISAASHPMYRISIDNHSMEIVETDGTAVYGPTIHEISISSGERYSVIINTTEGKEGDAFWLRTSVALDCMAQGVTQVGLAVVRYTGNGSITTAEPRTEAWTDLARPDTPCVGLDEMYHLSPRELVNASQTALESRVLDSKLGKFVDVYGNSFEGYGFNNVTYQNQINDPLLYVVQRGGTCNSSLIANATFADIGPVNIIINNLDSHIGHPYHMHGTEFQLMGRGTGALTLDDLPNTNLTLDNPTRKDTIWMQGGSWALLRIISDNPGVWALHCHIGWHLAKGKMAVVVVQPEAIKKIQWPESWMDLCANTDPNAFGPARRSVS</sequence>
<keyword id="KW-0134">Cell wall</keyword>
<keyword id="KW-0186">Copper</keyword>
<keyword id="KW-1015">Disulfide bond</keyword>
<keyword id="KW-0325">Glycoprotein</keyword>
<keyword id="KW-0479">Metal-binding</keyword>
<keyword id="KW-0560">Oxidoreductase</keyword>
<keyword id="KW-0677">Repeat</keyword>
<keyword id="KW-0964">Secreted</keyword>
<keyword id="KW-0732">Signal</keyword>
<organism>
    <name type="scientific">Cryptococcus neoformans var. grubii serotype A (strain H99 / ATCC 208821 / CBS 10515 / FGSC 9487)</name>
    <name type="common">Filobasidiella neoformans var. grubii</name>
    <dbReference type="NCBI Taxonomy" id="235443"/>
    <lineage>
        <taxon>Eukaryota</taxon>
        <taxon>Fungi</taxon>
        <taxon>Dikarya</taxon>
        <taxon>Basidiomycota</taxon>
        <taxon>Agaricomycotina</taxon>
        <taxon>Tremellomycetes</taxon>
        <taxon>Tremellales</taxon>
        <taxon>Cryptococcaceae</taxon>
        <taxon>Cryptococcus</taxon>
        <taxon>Cryptococcus neoformans species complex</taxon>
    </lineage>
</organism>
<protein>
    <recommendedName>
        <fullName evidence="10">Laccase-2</fullName>
        <ecNumber evidence="2">1.10.3.2</ecNumber>
    </recommendedName>
    <alternativeName>
        <fullName evidence="10">Diphenol oxidase 2</fullName>
    </alternativeName>
</protein>
<name>LAC2_CRYNH</name>
<accession>J9VQZ4</accession>
<evidence type="ECO:0000250" key="1">
    <source>
        <dbReference type="UniProtKB" id="D0VWU3"/>
    </source>
</evidence>
<evidence type="ECO:0000250" key="2">
    <source>
        <dbReference type="UniProtKB" id="J9VY90"/>
    </source>
</evidence>
<evidence type="ECO:0000250" key="3">
    <source>
        <dbReference type="UniProtKB" id="P17489"/>
    </source>
</evidence>
<evidence type="ECO:0000250" key="4">
    <source>
        <dbReference type="UniProtKB" id="Q55P57"/>
    </source>
</evidence>
<evidence type="ECO:0000250" key="5">
    <source>
        <dbReference type="UniProtKB" id="Q70KY3"/>
    </source>
</evidence>
<evidence type="ECO:0000255" key="6"/>
<evidence type="ECO:0000255" key="7">
    <source>
        <dbReference type="PROSITE-ProRule" id="PRU00498"/>
    </source>
</evidence>
<evidence type="ECO:0000269" key="8">
    <source>
    </source>
</evidence>
<evidence type="ECO:0000303" key="9">
    <source>
    </source>
</evidence>
<evidence type="ECO:0000305" key="10"/>